<name>WRK66_ARATH</name>
<organism>
    <name type="scientific">Arabidopsis thaliana</name>
    <name type="common">Mouse-ear cress</name>
    <dbReference type="NCBI Taxonomy" id="3702"/>
    <lineage>
        <taxon>Eukaryota</taxon>
        <taxon>Viridiplantae</taxon>
        <taxon>Streptophyta</taxon>
        <taxon>Embryophyta</taxon>
        <taxon>Tracheophyta</taxon>
        <taxon>Spermatophyta</taxon>
        <taxon>Magnoliopsida</taxon>
        <taxon>eudicotyledons</taxon>
        <taxon>Gunneridae</taxon>
        <taxon>Pentapetalae</taxon>
        <taxon>rosids</taxon>
        <taxon>malvids</taxon>
        <taxon>Brassicales</taxon>
        <taxon>Brassicaceae</taxon>
        <taxon>Camelineae</taxon>
        <taxon>Arabidopsis</taxon>
    </lineage>
</organism>
<dbReference type="EMBL" id="AC018849">
    <property type="protein sequence ID" value="AAF27132.1"/>
    <property type="molecule type" value="Genomic_DNA"/>
</dbReference>
<dbReference type="EMBL" id="CP002684">
    <property type="protein sequence ID" value="AEE36425.1"/>
    <property type="molecule type" value="Genomic_DNA"/>
</dbReference>
<dbReference type="EMBL" id="AB493541">
    <property type="protein sequence ID" value="BAH30379.1"/>
    <property type="molecule type" value="mRNA"/>
</dbReference>
<dbReference type="PIR" id="A96838">
    <property type="entry name" value="A96838"/>
</dbReference>
<dbReference type="RefSeq" id="NP_178174.1">
    <property type="nucleotide sequence ID" value="NM_106707.2"/>
</dbReference>
<dbReference type="SMR" id="Q9M8M6"/>
<dbReference type="BioGRID" id="29616">
    <property type="interactions" value="1"/>
</dbReference>
<dbReference type="STRING" id="3702.Q9M8M6"/>
<dbReference type="GlyGen" id="Q9M8M6">
    <property type="glycosylation" value="1 site"/>
</dbReference>
<dbReference type="PaxDb" id="3702-AT1G80590.1"/>
<dbReference type="EnsemblPlants" id="AT1G80590.1">
    <property type="protein sequence ID" value="AT1G80590.1"/>
    <property type="gene ID" value="AT1G80590"/>
</dbReference>
<dbReference type="GeneID" id="844398"/>
<dbReference type="Gramene" id="AT1G80590.1">
    <property type="protein sequence ID" value="AT1G80590.1"/>
    <property type="gene ID" value="AT1G80590"/>
</dbReference>
<dbReference type="KEGG" id="ath:AT1G80590"/>
<dbReference type="Araport" id="AT1G80590"/>
<dbReference type="TAIR" id="AT1G80590">
    <property type="gene designation" value="WRKY66"/>
</dbReference>
<dbReference type="HOGENOM" id="CLU_100759_0_0_1"/>
<dbReference type="InParanoid" id="Q9M8M6"/>
<dbReference type="PhylomeDB" id="Q9M8M6"/>
<dbReference type="PRO" id="PR:Q9M8M6"/>
<dbReference type="Proteomes" id="UP000006548">
    <property type="component" value="Chromosome 1"/>
</dbReference>
<dbReference type="ExpressionAtlas" id="Q9M8M6">
    <property type="expression patterns" value="baseline and differential"/>
</dbReference>
<dbReference type="GO" id="GO:0005634">
    <property type="term" value="C:nucleus"/>
    <property type="evidence" value="ECO:0007669"/>
    <property type="project" value="UniProtKB-SubCell"/>
</dbReference>
<dbReference type="GO" id="GO:0003700">
    <property type="term" value="F:DNA-binding transcription factor activity"/>
    <property type="evidence" value="ECO:0000250"/>
    <property type="project" value="TAIR"/>
</dbReference>
<dbReference type="GO" id="GO:0043565">
    <property type="term" value="F:sequence-specific DNA binding"/>
    <property type="evidence" value="ECO:0007669"/>
    <property type="project" value="InterPro"/>
</dbReference>
<dbReference type="Gene3D" id="2.20.25.80">
    <property type="entry name" value="WRKY domain"/>
    <property type="match status" value="1"/>
</dbReference>
<dbReference type="InterPro" id="IPR003657">
    <property type="entry name" value="WRKY_dom"/>
</dbReference>
<dbReference type="InterPro" id="IPR036576">
    <property type="entry name" value="WRKY_dom_sf"/>
</dbReference>
<dbReference type="InterPro" id="IPR044810">
    <property type="entry name" value="WRKY_plant"/>
</dbReference>
<dbReference type="PANTHER" id="PTHR31282">
    <property type="entry name" value="WRKY TRANSCRIPTION FACTOR 21-RELATED"/>
    <property type="match status" value="1"/>
</dbReference>
<dbReference type="Pfam" id="PF03106">
    <property type="entry name" value="WRKY"/>
    <property type="match status" value="1"/>
</dbReference>
<dbReference type="SMART" id="SM00774">
    <property type="entry name" value="WRKY"/>
    <property type="match status" value="1"/>
</dbReference>
<dbReference type="SUPFAM" id="SSF118290">
    <property type="entry name" value="WRKY DNA-binding domain"/>
    <property type="match status" value="1"/>
</dbReference>
<dbReference type="PROSITE" id="PS50811">
    <property type="entry name" value="WRKY"/>
    <property type="match status" value="1"/>
</dbReference>
<accession>Q9M8M6</accession>
<accession>C0SV38</accession>
<proteinExistence type="evidence at transcript level"/>
<gene>
    <name type="primary">WRKY66</name>
    <name type="ordered locus">At1g80590</name>
    <name type="ORF">T21F11.8</name>
</gene>
<reference key="1">
    <citation type="journal article" date="2000" name="Nature">
        <title>Sequence and analysis of chromosome 1 of the plant Arabidopsis thaliana.</title>
        <authorList>
            <person name="Theologis A."/>
            <person name="Ecker J.R."/>
            <person name="Palm C.J."/>
            <person name="Federspiel N.A."/>
            <person name="Kaul S."/>
            <person name="White O."/>
            <person name="Alonso J."/>
            <person name="Altafi H."/>
            <person name="Araujo R."/>
            <person name="Bowman C.L."/>
            <person name="Brooks S.Y."/>
            <person name="Buehler E."/>
            <person name="Chan A."/>
            <person name="Chao Q."/>
            <person name="Chen H."/>
            <person name="Cheuk R.F."/>
            <person name="Chin C.W."/>
            <person name="Chung M.K."/>
            <person name="Conn L."/>
            <person name="Conway A.B."/>
            <person name="Conway A.R."/>
            <person name="Creasy T.H."/>
            <person name="Dewar K."/>
            <person name="Dunn P."/>
            <person name="Etgu P."/>
            <person name="Feldblyum T.V."/>
            <person name="Feng J.-D."/>
            <person name="Fong B."/>
            <person name="Fujii C.Y."/>
            <person name="Gill J.E."/>
            <person name="Goldsmith A.D."/>
            <person name="Haas B."/>
            <person name="Hansen N.F."/>
            <person name="Hughes B."/>
            <person name="Huizar L."/>
            <person name="Hunter J.L."/>
            <person name="Jenkins J."/>
            <person name="Johnson-Hopson C."/>
            <person name="Khan S."/>
            <person name="Khaykin E."/>
            <person name="Kim C.J."/>
            <person name="Koo H.L."/>
            <person name="Kremenetskaia I."/>
            <person name="Kurtz D.B."/>
            <person name="Kwan A."/>
            <person name="Lam B."/>
            <person name="Langin-Hooper S."/>
            <person name="Lee A."/>
            <person name="Lee J.M."/>
            <person name="Lenz C.A."/>
            <person name="Li J.H."/>
            <person name="Li Y.-P."/>
            <person name="Lin X."/>
            <person name="Liu S.X."/>
            <person name="Liu Z.A."/>
            <person name="Luros J.S."/>
            <person name="Maiti R."/>
            <person name="Marziali A."/>
            <person name="Militscher J."/>
            <person name="Miranda M."/>
            <person name="Nguyen M."/>
            <person name="Nierman W.C."/>
            <person name="Osborne B.I."/>
            <person name="Pai G."/>
            <person name="Peterson J."/>
            <person name="Pham P.K."/>
            <person name="Rizzo M."/>
            <person name="Rooney T."/>
            <person name="Rowley D."/>
            <person name="Sakano H."/>
            <person name="Salzberg S.L."/>
            <person name="Schwartz J.R."/>
            <person name="Shinn P."/>
            <person name="Southwick A.M."/>
            <person name="Sun H."/>
            <person name="Tallon L.J."/>
            <person name="Tambunga G."/>
            <person name="Toriumi M.J."/>
            <person name="Town C.D."/>
            <person name="Utterback T."/>
            <person name="Van Aken S."/>
            <person name="Vaysberg M."/>
            <person name="Vysotskaia V.S."/>
            <person name="Walker M."/>
            <person name="Wu D."/>
            <person name="Yu G."/>
            <person name="Fraser C.M."/>
            <person name="Venter J.C."/>
            <person name="Davis R.W."/>
        </authorList>
    </citation>
    <scope>NUCLEOTIDE SEQUENCE [LARGE SCALE GENOMIC DNA]</scope>
    <source>
        <strain>cv. Columbia</strain>
    </source>
</reference>
<reference key="2">
    <citation type="journal article" date="2017" name="Plant J.">
        <title>Araport11: a complete reannotation of the Arabidopsis thaliana reference genome.</title>
        <authorList>
            <person name="Cheng C.Y."/>
            <person name="Krishnakumar V."/>
            <person name="Chan A.P."/>
            <person name="Thibaud-Nissen F."/>
            <person name="Schobel S."/>
            <person name="Town C.D."/>
        </authorList>
    </citation>
    <scope>GENOME REANNOTATION</scope>
    <source>
        <strain>cv. Columbia</strain>
    </source>
</reference>
<reference key="3">
    <citation type="submission" date="2009-03" db="EMBL/GenBank/DDBJ databases">
        <title>ORF cloning and analysis of Arabidopsis transcription factor genes.</title>
        <authorList>
            <person name="Fujita M."/>
            <person name="Mizukado S."/>
            <person name="Seki M."/>
            <person name="Shinozaki K."/>
            <person name="Mitsuda N."/>
            <person name="Takiguchi Y."/>
            <person name="Takagi M."/>
        </authorList>
    </citation>
    <scope>NUCLEOTIDE SEQUENCE [LARGE SCALE MRNA]</scope>
</reference>
<evidence type="ECO:0000250" key="1"/>
<evidence type="ECO:0000255" key="2">
    <source>
        <dbReference type="PROSITE-ProRule" id="PRU00223"/>
    </source>
</evidence>
<evidence type="ECO:0000305" key="3"/>
<protein>
    <recommendedName>
        <fullName>Probable WRKY transcription factor 66</fullName>
    </recommendedName>
    <alternativeName>
        <fullName>WRKY DNA-binding protein 66</fullName>
    </alternativeName>
</protein>
<sequence>MSLEIDAKAVSALLLGQGCANNLKTLLKNHETGSVSTEPLINSILDSFSFALSSQNIPRHVSQRSSKKKMCGIQGMEDSPTPAHIDGFIWRKYGQKTIKTSPHQRWYYRCAYAKDQNCDATKRVQKIQDNPPVYRNTYVGQHACEAPAYAVNNGGTYGSKMIKFDYVIPESVMPQPLSIDSQEITMEDKDTDDHILNYINEHLMEDEAYDVFPDVLGERCCFGLEPFPGLNINKS</sequence>
<feature type="chain" id="PRO_0000133707" description="Probable WRKY transcription factor 66">
    <location>
        <begin position="1"/>
        <end position="235"/>
    </location>
</feature>
<feature type="DNA-binding region" description="WRKY" evidence="2">
    <location>
        <begin position="79"/>
        <end position="147"/>
    </location>
</feature>
<comment type="function">
    <text evidence="1">Transcription factor. Interacts specifically with the W box (5'-(T)TGAC[CT]-3'), a frequently occurring elicitor-responsive cis-acting element (By similarity).</text>
</comment>
<comment type="subcellular location">
    <subcellularLocation>
        <location evidence="3">Nucleus</location>
    </subcellularLocation>
</comment>
<comment type="similarity">
    <text evidence="3">Belongs to the WRKY group III family.</text>
</comment>
<keyword id="KW-0238">DNA-binding</keyword>
<keyword id="KW-0539">Nucleus</keyword>
<keyword id="KW-1185">Reference proteome</keyword>
<keyword id="KW-0804">Transcription</keyword>
<keyword id="KW-0805">Transcription regulation</keyword>